<accession>P23135</accession>
<gene>
    <name type="primary">petC</name>
</gene>
<sequence length="272" mass="29495">MTTIVKRALVAAGMVLAIGGAAQANEGGVSLHKQDWSWKGIFGRYDQPQLQRGFQVFHEVCSTCHGMKRVAYRNLSALGFSEDGIKELAAEKEFPAGPDDNGDMFTRPGTPADHIPSPFANDKAAAAANGGAAPPDLSLLAKARPGGPNYIYSLLEGYASDSPGEPAEWWVKQQQEKGLEVAFNEAKYFNDYFPGHAISMPPPLMDDLITYEDGTAATKDQMAQDVVAYLNWAAEPELDARKSLGLKVLLFLGVLTAMLLALKLAIWRDVKH</sequence>
<keyword id="KW-1003">Cell membrane</keyword>
<keyword id="KW-0903">Direct protein sequencing</keyword>
<keyword id="KW-0249">Electron transport</keyword>
<keyword id="KW-0349">Heme</keyword>
<keyword id="KW-0408">Iron</keyword>
<keyword id="KW-0472">Membrane</keyword>
<keyword id="KW-0479">Metal-binding</keyword>
<keyword id="KW-0679">Respiratory chain</keyword>
<keyword id="KW-0732">Signal</keyword>
<keyword id="KW-0812">Transmembrane</keyword>
<keyword id="KW-1133">Transmembrane helix</keyword>
<keyword id="KW-0813">Transport</keyword>
<evidence type="ECO:0000255" key="1"/>
<evidence type="ECO:0000255" key="2">
    <source>
        <dbReference type="PROSITE-ProRule" id="PRU00433"/>
    </source>
</evidence>
<evidence type="ECO:0000269" key="3">
    <source>
    </source>
</evidence>
<evidence type="ECO:0000305" key="4"/>
<feature type="signal peptide" evidence="3">
    <location>
        <begin position="1"/>
        <end position="24"/>
    </location>
</feature>
<feature type="chain" id="PRO_0000006562" description="Cytochrome c1" evidence="3">
    <location>
        <begin position="25"/>
        <end position="272"/>
    </location>
</feature>
<feature type="transmembrane region" description="Helical; Note=Anchors to the membrane" evidence="1">
    <location>
        <begin position="244"/>
        <end position="261"/>
    </location>
</feature>
<feature type="binding site" description="covalent" evidence="2">
    <location>
        <position position="61"/>
    </location>
    <ligand>
        <name>heme c</name>
        <dbReference type="ChEBI" id="CHEBI:61717"/>
    </ligand>
</feature>
<feature type="binding site" description="covalent" evidence="2">
    <location>
        <position position="64"/>
    </location>
    <ligand>
        <name>heme c</name>
        <dbReference type="ChEBI" id="CHEBI:61717"/>
    </ligand>
</feature>
<feature type="binding site" description="axial binding residue" evidence="2">
    <location>
        <position position="65"/>
    </location>
    <ligand>
        <name>heme c</name>
        <dbReference type="ChEBI" id="CHEBI:61717"/>
    </ligand>
    <ligandPart>
        <name>Fe</name>
        <dbReference type="ChEBI" id="CHEBI:18248"/>
    </ligandPart>
</feature>
<feature type="binding site" description="axial binding residue" evidence="2">
    <location>
        <position position="200"/>
    </location>
    <ligand>
        <name>heme c</name>
        <dbReference type="ChEBI" id="CHEBI:61717"/>
    </ligand>
    <ligandPart>
        <name>Fe</name>
        <dbReference type="ChEBI" id="CHEBI:18248"/>
    </ligandPart>
</feature>
<comment type="function">
    <text>Component of the ubiquinol-cytochrome c reductase complex (complex III or cytochrome b-c1 complex), which is a respiratory chain that generates an electrochemical potential coupled to ATP synthesis.</text>
</comment>
<comment type="subunit">
    <text>The main subunits of complex b-c1 are: cytochrome b, cytochrome c1 and the Rieske protein.</text>
</comment>
<comment type="subcellular location">
    <subcellularLocation>
        <location evidence="4">Cell membrane</location>
        <topology evidence="4">Single-pass membrane protein</topology>
    </subcellularLocation>
</comment>
<comment type="PTM">
    <text>Binds 1 heme c group covalently per subunit.</text>
</comment>
<name>CY1_RHORU</name>
<reference key="1">
    <citation type="journal article" date="1990" name="Mol. Gen. Genet.">
        <title>The pet genes of Rhodospirillum rubrum: cloning and sequencing of the genes for the cytochrome bc1-complex.</title>
        <authorList>
            <person name="Majewski C."/>
            <person name="Trebst A."/>
        </authorList>
    </citation>
    <scope>NUCLEOTIDE SEQUENCE [GENOMIC DNA]</scope>
    <scope>PROTEIN SEQUENCE OF 25-50</scope>
    <source>
        <strain>FR1</strain>
    </source>
</reference>
<protein>
    <recommendedName>
        <fullName>Cytochrome c1</fullName>
    </recommendedName>
</protein>
<proteinExistence type="evidence at protein level"/>
<organism>
    <name type="scientific">Rhodospirillum rubrum</name>
    <dbReference type="NCBI Taxonomy" id="1085"/>
    <lineage>
        <taxon>Bacteria</taxon>
        <taxon>Pseudomonadati</taxon>
        <taxon>Pseudomonadota</taxon>
        <taxon>Alphaproteobacteria</taxon>
        <taxon>Rhodospirillales</taxon>
        <taxon>Rhodospirillaceae</taxon>
        <taxon>Rhodospirillum</taxon>
    </lineage>
</organism>
<dbReference type="EMBL" id="X55387">
    <property type="protein sequence ID" value="CAA39060.1"/>
    <property type="molecule type" value="Genomic_DNA"/>
</dbReference>
<dbReference type="PIR" id="S12258">
    <property type="entry name" value="CCQF1R"/>
</dbReference>
<dbReference type="SMR" id="P23135"/>
<dbReference type="GO" id="GO:0005886">
    <property type="term" value="C:plasma membrane"/>
    <property type="evidence" value="ECO:0007669"/>
    <property type="project" value="UniProtKB-SubCell"/>
</dbReference>
<dbReference type="GO" id="GO:0009055">
    <property type="term" value="F:electron transfer activity"/>
    <property type="evidence" value="ECO:0007669"/>
    <property type="project" value="InterPro"/>
</dbReference>
<dbReference type="GO" id="GO:0020037">
    <property type="term" value="F:heme binding"/>
    <property type="evidence" value="ECO:0007669"/>
    <property type="project" value="InterPro"/>
</dbReference>
<dbReference type="GO" id="GO:0046872">
    <property type="term" value="F:metal ion binding"/>
    <property type="evidence" value="ECO:0007669"/>
    <property type="project" value="UniProtKB-KW"/>
</dbReference>
<dbReference type="Gene3D" id="1.10.760.10">
    <property type="entry name" value="Cytochrome c-like domain"/>
    <property type="match status" value="1"/>
</dbReference>
<dbReference type="Gene3D" id="1.20.5.100">
    <property type="entry name" value="Cytochrome c1, transmembrane anchor, C-terminal"/>
    <property type="match status" value="1"/>
</dbReference>
<dbReference type="InterPro" id="IPR009056">
    <property type="entry name" value="Cyt_c-like_dom"/>
</dbReference>
<dbReference type="InterPro" id="IPR036909">
    <property type="entry name" value="Cyt_c-like_dom_sf"/>
</dbReference>
<dbReference type="InterPro" id="IPR002326">
    <property type="entry name" value="Cyt_c1"/>
</dbReference>
<dbReference type="PANTHER" id="PTHR10266">
    <property type="entry name" value="CYTOCHROME C1"/>
    <property type="match status" value="1"/>
</dbReference>
<dbReference type="PANTHER" id="PTHR10266:SF3">
    <property type="entry name" value="CYTOCHROME C1, HEME PROTEIN, MITOCHONDRIAL"/>
    <property type="match status" value="1"/>
</dbReference>
<dbReference type="Pfam" id="PF02167">
    <property type="entry name" value="Cytochrom_C1"/>
    <property type="match status" value="1"/>
</dbReference>
<dbReference type="PRINTS" id="PR00603">
    <property type="entry name" value="CYTOCHROMEC1"/>
</dbReference>
<dbReference type="SUPFAM" id="SSF46626">
    <property type="entry name" value="Cytochrome c"/>
    <property type="match status" value="1"/>
</dbReference>
<dbReference type="PROSITE" id="PS51007">
    <property type="entry name" value="CYTC"/>
    <property type="match status" value="1"/>
</dbReference>